<organism>
    <name type="scientific">Arabidopsis thaliana</name>
    <name type="common">Mouse-ear cress</name>
    <dbReference type="NCBI Taxonomy" id="3702"/>
    <lineage>
        <taxon>Eukaryota</taxon>
        <taxon>Viridiplantae</taxon>
        <taxon>Streptophyta</taxon>
        <taxon>Embryophyta</taxon>
        <taxon>Tracheophyta</taxon>
        <taxon>Spermatophyta</taxon>
        <taxon>Magnoliopsida</taxon>
        <taxon>eudicotyledons</taxon>
        <taxon>Gunneridae</taxon>
        <taxon>Pentapetalae</taxon>
        <taxon>rosids</taxon>
        <taxon>malvids</taxon>
        <taxon>Brassicales</taxon>
        <taxon>Brassicaceae</taxon>
        <taxon>Camelineae</taxon>
        <taxon>Arabidopsis</taxon>
    </lineage>
</organism>
<proteinExistence type="evidence at transcript level"/>
<evidence type="ECO:0000250" key="1">
    <source>
        <dbReference type="UniProtKB" id="Q39250"/>
    </source>
</evidence>
<evidence type="ECO:0000255" key="2">
    <source>
        <dbReference type="PROSITE-ProRule" id="PRU00599"/>
    </source>
</evidence>
<evidence type="ECO:0000269" key="3">
    <source>
    </source>
</evidence>
<evidence type="ECO:0000269" key="4">
    <source>
    </source>
</evidence>
<evidence type="ECO:0000305" key="5"/>
<accession>O49606</accession>
<feature type="chain" id="PRO_0000278101" description="Actin-depolymerizing factor 9">
    <location>
        <begin position="1"/>
        <end position="141"/>
    </location>
</feature>
<feature type="domain" description="ADF-H" evidence="2">
    <location>
        <begin position="8"/>
        <end position="141"/>
    </location>
</feature>
<feature type="modified residue" description="Phosphoserine" evidence="1">
    <location>
        <position position="8"/>
    </location>
</feature>
<reference key="1">
    <citation type="journal article" date="1999" name="Nature">
        <title>Sequence and analysis of chromosome 4 of the plant Arabidopsis thaliana.</title>
        <authorList>
            <person name="Mayer K.F.X."/>
            <person name="Schueller C."/>
            <person name="Wambutt R."/>
            <person name="Murphy G."/>
            <person name="Volckaert G."/>
            <person name="Pohl T."/>
            <person name="Duesterhoeft A."/>
            <person name="Stiekema W."/>
            <person name="Entian K.-D."/>
            <person name="Terryn N."/>
            <person name="Harris B."/>
            <person name="Ansorge W."/>
            <person name="Brandt P."/>
            <person name="Grivell L.A."/>
            <person name="Rieger M."/>
            <person name="Weichselgartner M."/>
            <person name="de Simone V."/>
            <person name="Obermaier B."/>
            <person name="Mache R."/>
            <person name="Mueller M."/>
            <person name="Kreis M."/>
            <person name="Delseny M."/>
            <person name="Puigdomenech P."/>
            <person name="Watson M."/>
            <person name="Schmidtheini T."/>
            <person name="Reichert B."/>
            <person name="Portetelle D."/>
            <person name="Perez-Alonso M."/>
            <person name="Boutry M."/>
            <person name="Bancroft I."/>
            <person name="Vos P."/>
            <person name="Hoheisel J."/>
            <person name="Zimmermann W."/>
            <person name="Wedler H."/>
            <person name="Ridley P."/>
            <person name="Langham S.-A."/>
            <person name="McCullagh B."/>
            <person name="Bilham L."/>
            <person name="Robben J."/>
            <person name="van der Schueren J."/>
            <person name="Grymonprez B."/>
            <person name="Chuang Y.-J."/>
            <person name="Vandenbussche F."/>
            <person name="Braeken M."/>
            <person name="Weltjens I."/>
            <person name="Voet M."/>
            <person name="Bastiaens I."/>
            <person name="Aert R."/>
            <person name="Defoor E."/>
            <person name="Weitzenegger T."/>
            <person name="Bothe G."/>
            <person name="Ramsperger U."/>
            <person name="Hilbert H."/>
            <person name="Braun M."/>
            <person name="Holzer E."/>
            <person name="Brandt A."/>
            <person name="Peters S."/>
            <person name="van Staveren M."/>
            <person name="Dirkse W."/>
            <person name="Mooijman P."/>
            <person name="Klein Lankhorst R."/>
            <person name="Rose M."/>
            <person name="Hauf J."/>
            <person name="Koetter P."/>
            <person name="Berneiser S."/>
            <person name="Hempel S."/>
            <person name="Feldpausch M."/>
            <person name="Lamberth S."/>
            <person name="Van den Daele H."/>
            <person name="De Keyser A."/>
            <person name="Buysshaert C."/>
            <person name="Gielen J."/>
            <person name="Villarroel R."/>
            <person name="De Clercq R."/>
            <person name="van Montagu M."/>
            <person name="Rogers J."/>
            <person name="Cronin A."/>
            <person name="Quail M.A."/>
            <person name="Bray-Allen S."/>
            <person name="Clark L."/>
            <person name="Doggett J."/>
            <person name="Hall S."/>
            <person name="Kay M."/>
            <person name="Lennard N."/>
            <person name="McLay K."/>
            <person name="Mayes R."/>
            <person name="Pettett A."/>
            <person name="Rajandream M.A."/>
            <person name="Lyne M."/>
            <person name="Benes V."/>
            <person name="Rechmann S."/>
            <person name="Borkova D."/>
            <person name="Bloecker H."/>
            <person name="Scharfe M."/>
            <person name="Grimm M."/>
            <person name="Loehnert T.-H."/>
            <person name="Dose S."/>
            <person name="de Haan M."/>
            <person name="Maarse A.C."/>
            <person name="Schaefer M."/>
            <person name="Mueller-Auer S."/>
            <person name="Gabel C."/>
            <person name="Fuchs M."/>
            <person name="Fartmann B."/>
            <person name="Granderath K."/>
            <person name="Dauner D."/>
            <person name="Herzl A."/>
            <person name="Neumann S."/>
            <person name="Argiriou A."/>
            <person name="Vitale D."/>
            <person name="Liguori R."/>
            <person name="Piravandi E."/>
            <person name="Massenet O."/>
            <person name="Quigley F."/>
            <person name="Clabauld G."/>
            <person name="Muendlein A."/>
            <person name="Felber R."/>
            <person name="Schnabl S."/>
            <person name="Hiller R."/>
            <person name="Schmidt W."/>
            <person name="Lecharny A."/>
            <person name="Aubourg S."/>
            <person name="Chefdor F."/>
            <person name="Cooke R."/>
            <person name="Berger C."/>
            <person name="Monfort A."/>
            <person name="Casacuberta E."/>
            <person name="Gibbons T."/>
            <person name="Weber N."/>
            <person name="Vandenbol M."/>
            <person name="Bargues M."/>
            <person name="Terol J."/>
            <person name="Torres A."/>
            <person name="Perez-Perez A."/>
            <person name="Purnelle B."/>
            <person name="Bent E."/>
            <person name="Johnson S."/>
            <person name="Tacon D."/>
            <person name="Jesse T."/>
            <person name="Heijnen L."/>
            <person name="Schwarz S."/>
            <person name="Scholler P."/>
            <person name="Heber S."/>
            <person name="Francs P."/>
            <person name="Bielke C."/>
            <person name="Frishman D."/>
            <person name="Haase D."/>
            <person name="Lemcke K."/>
            <person name="Mewes H.-W."/>
            <person name="Stocker S."/>
            <person name="Zaccaria P."/>
            <person name="Bevan M."/>
            <person name="Wilson R.K."/>
            <person name="de la Bastide M."/>
            <person name="Habermann K."/>
            <person name="Parnell L."/>
            <person name="Dedhia N."/>
            <person name="Gnoj L."/>
            <person name="Schutz K."/>
            <person name="Huang E."/>
            <person name="Spiegel L."/>
            <person name="Sekhon M."/>
            <person name="Murray J."/>
            <person name="Sheet P."/>
            <person name="Cordes M."/>
            <person name="Abu-Threideh J."/>
            <person name="Stoneking T."/>
            <person name="Kalicki J."/>
            <person name="Graves T."/>
            <person name="Harmon G."/>
            <person name="Edwards J."/>
            <person name="Latreille P."/>
            <person name="Courtney L."/>
            <person name="Cloud J."/>
            <person name="Abbott A."/>
            <person name="Scott K."/>
            <person name="Johnson D."/>
            <person name="Minx P."/>
            <person name="Bentley D."/>
            <person name="Fulton B."/>
            <person name="Miller N."/>
            <person name="Greco T."/>
            <person name="Kemp K."/>
            <person name="Kramer J."/>
            <person name="Fulton L."/>
            <person name="Mardis E."/>
            <person name="Dante M."/>
            <person name="Pepin K."/>
            <person name="Hillier L.W."/>
            <person name="Nelson J."/>
            <person name="Spieth J."/>
            <person name="Ryan E."/>
            <person name="Andrews S."/>
            <person name="Geisel C."/>
            <person name="Layman D."/>
            <person name="Du H."/>
            <person name="Ali J."/>
            <person name="Berghoff A."/>
            <person name="Jones K."/>
            <person name="Drone K."/>
            <person name="Cotton M."/>
            <person name="Joshu C."/>
            <person name="Antonoiu B."/>
            <person name="Zidanic M."/>
            <person name="Strong C."/>
            <person name="Sun H."/>
            <person name="Lamar B."/>
            <person name="Yordan C."/>
            <person name="Ma P."/>
            <person name="Zhong J."/>
            <person name="Preston R."/>
            <person name="Vil D."/>
            <person name="Shekher M."/>
            <person name="Matero A."/>
            <person name="Shah R."/>
            <person name="Swaby I.K."/>
            <person name="O'Shaughnessy A."/>
            <person name="Rodriguez M."/>
            <person name="Hoffman J."/>
            <person name="Till S."/>
            <person name="Granat S."/>
            <person name="Shohdy N."/>
            <person name="Hasegawa A."/>
            <person name="Hameed A."/>
            <person name="Lodhi M."/>
            <person name="Johnson A."/>
            <person name="Chen E."/>
            <person name="Marra M.A."/>
            <person name="Martienssen R."/>
            <person name="McCombie W.R."/>
        </authorList>
    </citation>
    <scope>NUCLEOTIDE SEQUENCE [LARGE SCALE GENOMIC DNA]</scope>
    <source>
        <strain>cv. Columbia</strain>
    </source>
</reference>
<reference key="2">
    <citation type="journal article" date="2017" name="Plant J.">
        <title>Araport11: a complete reannotation of the Arabidopsis thaliana reference genome.</title>
        <authorList>
            <person name="Cheng C.Y."/>
            <person name="Krishnakumar V."/>
            <person name="Chan A.P."/>
            <person name="Thibaud-Nissen F."/>
            <person name="Schobel S."/>
            <person name="Town C.D."/>
        </authorList>
    </citation>
    <scope>GENOME REANNOTATION</scope>
    <source>
        <strain>cv. Columbia</strain>
    </source>
</reference>
<reference key="3">
    <citation type="submission" date="2006-11" db="EMBL/GenBank/DDBJ databases">
        <title>Arabidopsis ORF clones.</title>
        <authorList>
            <person name="Bautista V.R."/>
            <person name="Kim C.J."/>
            <person name="Chen H."/>
            <person name="Quinitio C."/>
            <person name="Ecker J.R."/>
        </authorList>
    </citation>
    <scope>NUCLEOTIDE SEQUENCE [LARGE SCALE MRNA] OF 12-141</scope>
    <source>
        <strain>cv. Columbia</strain>
    </source>
</reference>
<reference key="4">
    <citation type="journal article" date="2006" name="J. Plant Physiol.">
        <title>Comparative study of rice and Arabidopsis actin-depolymerizing factors gene families.</title>
        <authorList>
            <person name="Feng Y."/>
            <person name="Liu Q."/>
            <person name="Xue Q."/>
        </authorList>
    </citation>
    <scope>GENE FAMILY</scope>
</reference>
<reference key="5">
    <citation type="journal article" date="2008" name="Plant Mol. Biol.">
        <title>ACTIN DEPOLYMERIZING FACTOR9 controls development and gene expression in Arabidopsis.</title>
        <authorList>
            <person name="Burgos-Rivera B."/>
            <person name="Ruzicka D.R."/>
            <person name="Deal R.B."/>
            <person name="McKinney E.C."/>
            <person name="King-Reid L."/>
            <person name="Meagher R.B."/>
        </authorList>
    </citation>
    <scope>FUNCTION</scope>
    <scope>INDUCTION</scope>
    <scope>DISRUPTION PHENOTYPE</scope>
</reference>
<reference key="6">
    <citation type="journal article" date="2011" name="FEBS Lett.">
        <title>Arabidopsis actin-depolymerizing factors (ADFs) 1 and 9 display antagonist activities.</title>
        <authorList>
            <person name="Tholl S."/>
            <person name="Moreau F."/>
            <person name="Hoffmann C."/>
            <person name="Arumugam K."/>
            <person name="Dieterle M."/>
            <person name="Moes D."/>
            <person name="Neumann K."/>
            <person name="Steinmetz A."/>
            <person name="Thomas C."/>
        </authorList>
    </citation>
    <scope>FUNCTION</scope>
    <scope>SUBCELLULAR LOCATION</scope>
</reference>
<dbReference type="EMBL" id="AL022023">
    <property type="protein sequence ID" value="CAA17762.1"/>
    <property type="status" value="ALT_SEQ"/>
    <property type="molecule type" value="Genomic_DNA"/>
</dbReference>
<dbReference type="EMBL" id="AL161586">
    <property type="protein sequence ID" value="CAB80214.1"/>
    <property type="status" value="ALT_SEQ"/>
    <property type="molecule type" value="Genomic_DNA"/>
</dbReference>
<dbReference type="EMBL" id="CP002687">
    <property type="protein sequence ID" value="AEE86442.1"/>
    <property type="molecule type" value="Genomic_DNA"/>
</dbReference>
<dbReference type="EMBL" id="BT029315">
    <property type="protein sequence ID" value="ABK32129.1"/>
    <property type="molecule type" value="mRNA"/>
</dbReference>
<dbReference type="PIR" id="T05767">
    <property type="entry name" value="T05767"/>
</dbReference>
<dbReference type="RefSeq" id="NP_195223.2">
    <property type="nucleotide sequence ID" value="NM_119663.4"/>
</dbReference>
<dbReference type="SMR" id="O49606"/>
<dbReference type="FunCoup" id="O49606">
    <property type="interactions" value="2496"/>
</dbReference>
<dbReference type="STRING" id="3702.O49606"/>
<dbReference type="iPTMnet" id="O49606"/>
<dbReference type="PaxDb" id="3702-AT4G34970.1"/>
<dbReference type="ProteomicsDB" id="244778"/>
<dbReference type="EnsemblPlants" id="AT4G34970.1">
    <property type="protein sequence ID" value="AT4G34970.1"/>
    <property type="gene ID" value="AT4G34970"/>
</dbReference>
<dbReference type="GeneID" id="829649"/>
<dbReference type="Gramene" id="AT4G34970.1">
    <property type="protein sequence ID" value="AT4G34970.1"/>
    <property type="gene ID" value="AT4G34970"/>
</dbReference>
<dbReference type="KEGG" id="ath:AT4G34970"/>
<dbReference type="Araport" id="AT4G34970"/>
<dbReference type="TAIR" id="AT4G34970">
    <property type="gene designation" value="ADF9"/>
</dbReference>
<dbReference type="eggNOG" id="KOG1735">
    <property type="taxonomic scope" value="Eukaryota"/>
</dbReference>
<dbReference type="HOGENOM" id="CLU_094004_2_2_1"/>
<dbReference type="InParanoid" id="O49606"/>
<dbReference type="OMA" id="HDKKITV"/>
<dbReference type="OrthoDB" id="10249245at2759"/>
<dbReference type="PRO" id="PR:O49606"/>
<dbReference type="Proteomes" id="UP000006548">
    <property type="component" value="Chromosome 4"/>
</dbReference>
<dbReference type="ExpressionAtlas" id="O49606">
    <property type="expression patterns" value="baseline and differential"/>
</dbReference>
<dbReference type="GO" id="GO:0015629">
    <property type="term" value="C:actin cytoskeleton"/>
    <property type="evidence" value="ECO:0007669"/>
    <property type="project" value="InterPro"/>
</dbReference>
<dbReference type="GO" id="GO:0005737">
    <property type="term" value="C:cytoplasm"/>
    <property type="evidence" value="ECO:0007669"/>
    <property type="project" value="UniProtKB-KW"/>
</dbReference>
<dbReference type="GO" id="GO:0003779">
    <property type="term" value="F:actin binding"/>
    <property type="evidence" value="ECO:0007669"/>
    <property type="project" value="UniProtKB-KW"/>
</dbReference>
<dbReference type="GO" id="GO:0051017">
    <property type="term" value="P:actin filament bundle assembly"/>
    <property type="evidence" value="ECO:0000314"/>
    <property type="project" value="TAIR"/>
</dbReference>
<dbReference type="GO" id="GO:0030042">
    <property type="term" value="P:actin filament depolymerization"/>
    <property type="evidence" value="ECO:0007669"/>
    <property type="project" value="InterPro"/>
</dbReference>
<dbReference type="GO" id="GO:0030041">
    <property type="term" value="P:actin filament polymerization"/>
    <property type="evidence" value="ECO:0000314"/>
    <property type="project" value="TAIR"/>
</dbReference>
<dbReference type="CDD" id="cd11286">
    <property type="entry name" value="ADF_cofilin_like"/>
    <property type="match status" value="1"/>
</dbReference>
<dbReference type="FunFam" id="3.40.20.10:FF:000025">
    <property type="entry name" value="Actin-depolymerizing factor 2"/>
    <property type="match status" value="1"/>
</dbReference>
<dbReference type="Gene3D" id="3.40.20.10">
    <property type="entry name" value="Severin"/>
    <property type="match status" value="1"/>
</dbReference>
<dbReference type="InterPro" id="IPR002108">
    <property type="entry name" value="ADF-H"/>
</dbReference>
<dbReference type="InterPro" id="IPR029006">
    <property type="entry name" value="ADF-H/Gelsolin-like_dom_sf"/>
</dbReference>
<dbReference type="InterPro" id="IPR017904">
    <property type="entry name" value="ADF/Cofilin"/>
</dbReference>
<dbReference type="PANTHER" id="PTHR11913">
    <property type="entry name" value="COFILIN-RELATED"/>
    <property type="match status" value="1"/>
</dbReference>
<dbReference type="Pfam" id="PF00241">
    <property type="entry name" value="Cofilin_ADF"/>
    <property type="match status" value="1"/>
</dbReference>
<dbReference type="SMART" id="SM00102">
    <property type="entry name" value="ADF"/>
    <property type="match status" value="1"/>
</dbReference>
<dbReference type="SUPFAM" id="SSF55753">
    <property type="entry name" value="Actin depolymerizing proteins"/>
    <property type="match status" value="1"/>
</dbReference>
<dbReference type="PROSITE" id="PS51263">
    <property type="entry name" value="ADF_H"/>
    <property type="match status" value="1"/>
</dbReference>
<gene>
    <name type="primary">ADF9</name>
    <name type="ordered locus">At4g34970</name>
    <name type="ORF">M4E13.30</name>
</gene>
<comment type="function">
    <text evidence="3 4">Does not display typical F-actin depolymerizing activity. Exhibits a high ability to stabilize and cross-link actin filaments. Functions as an actin bundling protein with the highest efficiency under acidic conditions (PubMed:21570971). May play a role in the modulation of levels of histone H3 lysine 4 trimethylation and H3 lysine 9 and 14 acetylation at the FLC locus (PubMed:18830798).</text>
</comment>
<comment type="subcellular location">
    <subcellularLocation>
        <location evidence="4">Cytoplasm</location>
        <location evidence="4">Cytoskeleton</location>
    </subcellularLocation>
</comment>
<comment type="induction">
    <text evidence="4">By auxin, gibberellin, abscisic acid (ABA) and kinetin in roots.</text>
</comment>
<comment type="disruption phenotype">
    <text evidence="4">Developmental defects, reduced plant size, early flowering and decreased number of inflorescence secondary branches.</text>
</comment>
<comment type="similarity">
    <text evidence="5">Belongs to the actin-binding proteins ADF family.</text>
</comment>
<comment type="sequence caution" evidence="5">
    <conflict type="erroneous gene model prediction">
        <sequence resource="EMBL-CDS" id="CAA17762"/>
    </conflict>
</comment>
<comment type="sequence caution" evidence="5">
    <conflict type="erroneous gene model prediction">
        <sequence resource="EMBL-CDS" id="CAB80214"/>
    </conflict>
</comment>
<keyword id="KW-0009">Actin-binding</keyword>
<keyword id="KW-0963">Cytoplasm</keyword>
<keyword id="KW-0206">Cytoskeleton</keyword>
<keyword id="KW-0597">Phosphoprotein</keyword>
<keyword id="KW-1185">Reference proteome</keyword>
<protein>
    <recommendedName>
        <fullName>Actin-depolymerizing factor 9</fullName>
        <shortName>ADF-9</shortName>
        <shortName>AtADF9</shortName>
    </recommendedName>
</protein>
<sequence>MALKTATSGMWMTDDCKKSFMEMKWKKVHRYVVYKLEEKSRKVTVDKVGAAGESYDDLAASLPEDDCRYAVFDFDYVTVDNCRMSKIFFITWSPEASRIREKMMYATSKSGLRRVLDGVHYELQATDPTEMGFDKIQDRAK</sequence>
<name>ADF9_ARATH</name>